<name>MTLD_ECOL6</name>
<evidence type="ECO:0000255" key="1">
    <source>
        <dbReference type="HAMAP-Rule" id="MF_00196"/>
    </source>
</evidence>
<evidence type="ECO:0000305" key="2"/>
<organism>
    <name type="scientific">Escherichia coli O6:H1 (strain CFT073 / ATCC 700928 / UPEC)</name>
    <dbReference type="NCBI Taxonomy" id="199310"/>
    <lineage>
        <taxon>Bacteria</taxon>
        <taxon>Pseudomonadati</taxon>
        <taxon>Pseudomonadota</taxon>
        <taxon>Gammaproteobacteria</taxon>
        <taxon>Enterobacterales</taxon>
        <taxon>Enterobacteriaceae</taxon>
        <taxon>Escherichia</taxon>
    </lineage>
</organism>
<dbReference type="EC" id="1.1.1.17" evidence="1"/>
<dbReference type="EMBL" id="AE014075">
    <property type="protein sequence ID" value="AAN82853.1"/>
    <property type="status" value="ALT_INIT"/>
    <property type="molecule type" value="Genomic_DNA"/>
</dbReference>
<dbReference type="RefSeq" id="WP_000645420.1">
    <property type="nucleotide sequence ID" value="NZ_CP051263.1"/>
</dbReference>
<dbReference type="SMR" id="Q8FCB7"/>
<dbReference type="STRING" id="199310.c4417"/>
<dbReference type="DNASU" id="1037857"/>
<dbReference type="KEGG" id="ecc:c4417"/>
<dbReference type="eggNOG" id="COG0246">
    <property type="taxonomic scope" value="Bacteria"/>
</dbReference>
<dbReference type="HOGENOM" id="CLU_036089_2_0_6"/>
<dbReference type="Proteomes" id="UP000001410">
    <property type="component" value="Chromosome"/>
</dbReference>
<dbReference type="GO" id="GO:0005829">
    <property type="term" value="C:cytosol"/>
    <property type="evidence" value="ECO:0007669"/>
    <property type="project" value="TreeGrafter"/>
</dbReference>
<dbReference type="GO" id="GO:0008926">
    <property type="term" value="F:mannitol-1-phosphate 5-dehydrogenase activity"/>
    <property type="evidence" value="ECO:0007669"/>
    <property type="project" value="UniProtKB-UniRule"/>
</dbReference>
<dbReference type="GO" id="GO:0019592">
    <property type="term" value="P:mannitol catabolic process"/>
    <property type="evidence" value="ECO:0007669"/>
    <property type="project" value="TreeGrafter"/>
</dbReference>
<dbReference type="FunFam" id="1.10.1040.10:FF:000009">
    <property type="entry name" value="Mannitol-1-phosphate 5-dehydrogenase"/>
    <property type="match status" value="1"/>
</dbReference>
<dbReference type="FunFam" id="3.40.50.720:FF:000075">
    <property type="entry name" value="Mannitol-1-phosphate 5-dehydrogenase"/>
    <property type="match status" value="1"/>
</dbReference>
<dbReference type="Gene3D" id="1.10.1040.10">
    <property type="entry name" value="N-(1-d-carboxylethyl)-l-norvaline Dehydrogenase, domain 2"/>
    <property type="match status" value="1"/>
</dbReference>
<dbReference type="Gene3D" id="3.40.50.720">
    <property type="entry name" value="NAD(P)-binding Rossmann-like Domain"/>
    <property type="match status" value="1"/>
</dbReference>
<dbReference type="HAMAP" id="MF_00196">
    <property type="entry name" value="Mannitol_dehydrog"/>
    <property type="match status" value="1"/>
</dbReference>
<dbReference type="InterPro" id="IPR008927">
    <property type="entry name" value="6-PGluconate_DH-like_C_sf"/>
</dbReference>
<dbReference type="InterPro" id="IPR013328">
    <property type="entry name" value="6PGD_dom2"/>
</dbReference>
<dbReference type="InterPro" id="IPR023028">
    <property type="entry name" value="Mannitol_1_phos_5_DH"/>
</dbReference>
<dbReference type="InterPro" id="IPR000669">
    <property type="entry name" value="Mannitol_DH"/>
</dbReference>
<dbReference type="InterPro" id="IPR013118">
    <property type="entry name" value="Mannitol_DH_C"/>
</dbReference>
<dbReference type="InterPro" id="IPR023027">
    <property type="entry name" value="Mannitol_DH_CS"/>
</dbReference>
<dbReference type="InterPro" id="IPR013131">
    <property type="entry name" value="Mannitol_DH_N"/>
</dbReference>
<dbReference type="InterPro" id="IPR036291">
    <property type="entry name" value="NAD(P)-bd_dom_sf"/>
</dbReference>
<dbReference type="NCBIfam" id="NF002646">
    <property type="entry name" value="PRK02318.1-2"/>
    <property type="match status" value="1"/>
</dbReference>
<dbReference type="NCBIfam" id="NF002647">
    <property type="entry name" value="PRK02318.1-3"/>
    <property type="match status" value="1"/>
</dbReference>
<dbReference type="NCBIfam" id="NF002648">
    <property type="entry name" value="PRK02318.1-4"/>
    <property type="match status" value="1"/>
</dbReference>
<dbReference type="NCBIfam" id="NF002650">
    <property type="entry name" value="PRK02318.2-2"/>
    <property type="match status" value="1"/>
</dbReference>
<dbReference type="NCBIfam" id="NF002652">
    <property type="entry name" value="PRK02318.2-5"/>
    <property type="match status" value="1"/>
</dbReference>
<dbReference type="PANTHER" id="PTHR30524:SF0">
    <property type="entry name" value="ALTRONATE OXIDOREDUCTASE-RELATED"/>
    <property type="match status" value="1"/>
</dbReference>
<dbReference type="PANTHER" id="PTHR30524">
    <property type="entry name" value="MANNITOL-1-PHOSPHATE 5-DEHYDROGENASE"/>
    <property type="match status" value="1"/>
</dbReference>
<dbReference type="Pfam" id="PF01232">
    <property type="entry name" value="Mannitol_dh"/>
    <property type="match status" value="1"/>
</dbReference>
<dbReference type="Pfam" id="PF08125">
    <property type="entry name" value="Mannitol_dh_C"/>
    <property type="match status" value="1"/>
</dbReference>
<dbReference type="PRINTS" id="PR00084">
    <property type="entry name" value="MTLDHDRGNASE"/>
</dbReference>
<dbReference type="SUPFAM" id="SSF48179">
    <property type="entry name" value="6-phosphogluconate dehydrogenase C-terminal domain-like"/>
    <property type="match status" value="1"/>
</dbReference>
<dbReference type="SUPFAM" id="SSF51735">
    <property type="entry name" value="NAD(P)-binding Rossmann-fold domains"/>
    <property type="match status" value="1"/>
</dbReference>
<dbReference type="PROSITE" id="PS00974">
    <property type="entry name" value="MANNITOL_DHGENASE"/>
    <property type="match status" value="1"/>
</dbReference>
<comment type="catalytic activity">
    <reaction evidence="1">
        <text>D-mannitol 1-phosphate + NAD(+) = beta-D-fructose 6-phosphate + NADH + H(+)</text>
        <dbReference type="Rhea" id="RHEA:19661"/>
        <dbReference type="ChEBI" id="CHEBI:15378"/>
        <dbReference type="ChEBI" id="CHEBI:57540"/>
        <dbReference type="ChEBI" id="CHEBI:57634"/>
        <dbReference type="ChEBI" id="CHEBI:57945"/>
        <dbReference type="ChEBI" id="CHEBI:61381"/>
        <dbReference type="EC" id="1.1.1.17"/>
    </reaction>
</comment>
<comment type="similarity">
    <text evidence="1">Belongs to the mannitol dehydrogenase family.</text>
</comment>
<comment type="sequence caution" evidence="2">
    <conflict type="erroneous initiation">
        <sequence resource="EMBL-CDS" id="AAN82853"/>
    </conflict>
</comment>
<keyword id="KW-0007">Acetylation</keyword>
<keyword id="KW-0520">NAD</keyword>
<keyword id="KW-0560">Oxidoreductase</keyword>
<keyword id="KW-1185">Reference proteome</keyword>
<proteinExistence type="inferred from homology"/>
<accession>Q8FCB7</accession>
<sequence>MKALHFGAGNIGRGFIGKLLADAGIQLTFADVNQVVLDALNARHSYQVHVVGETEQVDTVSGVNAVSSIGDDVVDLIAQVDLVTTAVGPVVLERIAPAIAKGLVKRKEQGNESPLNIIACENMVRGTTQLKGHVMNALPEDAKAWVEEHVGFVDSAVDRIVPPSASATNDPLEVTVETFSEWIVDKTQFKGALPNIPGMELTDNLMAFVERKLFTLNTGHAITAYLGKLAGHQTIRDAILDEKIRAVVKGAMEESGAVLIKRYGFDADKHAAYIQKILGRFENPYLKDDVERVGRQPLRKLSAGDRLIKPLLGTLEYGLPHKNLIEGIAAAMHFRSEDDPQAQELAALIADKGPQAALAQISGLDANSEVVSEAVTAYKAMQ</sequence>
<reference key="1">
    <citation type="journal article" date="2002" name="Proc. Natl. Acad. Sci. U.S.A.">
        <title>Extensive mosaic structure revealed by the complete genome sequence of uropathogenic Escherichia coli.</title>
        <authorList>
            <person name="Welch R.A."/>
            <person name="Burland V."/>
            <person name="Plunkett G. III"/>
            <person name="Redford P."/>
            <person name="Roesch P."/>
            <person name="Rasko D."/>
            <person name="Buckles E.L."/>
            <person name="Liou S.-R."/>
            <person name="Boutin A."/>
            <person name="Hackett J."/>
            <person name="Stroud D."/>
            <person name="Mayhew G.F."/>
            <person name="Rose D.J."/>
            <person name="Zhou S."/>
            <person name="Schwartz D.C."/>
            <person name="Perna N.T."/>
            <person name="Mobley H.L.T."/>
            <person name="Donnenberg M.S."/>
            <person name="Blattner F.R."/>
        </authorList>
    </citation>
    <scope>NUCLEOTIDE SEQUENCE [LARGE SCALE GENOMIC DNA]</scope>
    <source>
        <strain>CFT073 / ATCC 700928 / UPEC</strain>
    </source>
</reference>
<gene>
    <name evidence="1" type="primary">mtlD</name>
    <name type="ordered locus">c4417</name>
</gene>
<protein>
    <recommendedName>
        <fullName evidence="1">Mannitol-1-phosphate 5-dehydrogenase</fullName>
        <ecNumber evidence="1">1.1.1.17</ecNumber>
    </recommendedName>
</protein>
<feature type="chain" id="PRO_0000170704" description="Mannitol-1-phosphate 5-dehydrogenase">
    <location>
        <begin position="1"/>
        <end position="382"/>
    </location>
</feature>
<feature type="binding site" evidence="1">
    <location>
        <begin position="3"/>
        <end position="14"/>
    </location>
    <ligand>
        <name>NAD(+)</name>
        <dbReference type="ChEBI" id="CHEBI:57540"/>
    </ligand>
</feature>
<feature type="modified residue" description="N6-acetyllysine" evidence="1">
    <location>
        <position position="269"/>
    </location>
</feature>